<gene>
    <name evidence="1" type="primary">aspS</name>
    <name type="ordered locus">lpp1434</name>
</gene>
<name>SYDND_LEGPA</name>
<dbReference type="EC" id="6.1.1.23" evidence="1"/>
<dbReference type="EMBL" id="CR628336">
    <property type="protein sequence ID" value="CAH12585.1"/>
    <property type="molecule type" value="Genomic_DNA"/>
</dbReference>
<dbReference type="RefSeq" id="WP_011213761.1">
    <property type="nucleotide sequence ID" value="NC_006368.1"/>
</dbReference>
<dbReference type="SMR" id="Q5X586"/>
<dbReference type="KEGG" id="lpp:lpp1434"/>
<dbReference type="LegioList" id="lpp1434"/>
<dbReference type="HOGENOM" id="CLU_014330_3_2_6"/>
<dbReference type="GO" id="GO:0005737">
    <property type="term" value="C:cytoplasm"/>
    <property type="evidence" value="ECO:0007669"/>
    <property type="project" value="UniProtKB-SubCell"/>
</dbReference>
<dbReference type="GO" id="GO:0004815">
    <property type="term" value="F:aspartate-tRNA ligase activity"/>
    <property type="evidence" value="ECO:0007669"/>
    <property type="project" value="UniProtKB-UniRule"/>
</dbReference>
<dbReference type="GO" id="GO:0050560">
    <property type="term" value="F:aspartate-tRNA(Asn) ligase activity"/>
    <property type="evidence" value="ECO:0007669"/>
    <property type="project" value="UniProtKB-EC"/>
</dbReference>
<dbReference type="GO" id="GO:0005524">
    <property type="term" value="F:ATP binding"/>
    <property type="evidence" value="ECO:0007669"/>
    <property type="project" value="UniProtKB-UniRule"/>
</dbReference>
<dbReference type="GO" id="GO:0003676">
    <property type="term" value="F:nucleic acid binding"/>
    <property type="evidence" value="ECO:0007669"/>
    <property type="project" value="InterPro"/>
</dbReference>
<dbReference type="GO" id="GO:0006422">
    <property type="term" value="P:aspartyl-tRNA aminoacylation"/>
    <property type="evidence" value="ECO:0007669"/>
    <property type="project" value="UniProtKB-UniRule"/>
</dbReference>
<dbReference type="CDD" id="cd00777">
    <property type="entry name" value="AspRS_core"/>
    <property type="match status" value="1"/>
</dbReference>
<dbReference type="CDD" id="cd04317">
    <property type="entry name" value="EcAspRS_like_N"/>
    <property type="match status" value="1"/>
</dbReference>
<dbReference type="Gene3D" id="3.30.930.10">
    <property type="entry name" value="Bira Bifunctional Protein, Domain 2"/>
    <property type="match status" value="1"/>
</dbReference>
<dbReference type="Gene3D" id="3.30.1360.30">
    <property type="entry name" value="GAD-like domain"/>
    <property type="match status" value="1"/>
</dbReference>
<dbReference type="Gene3D" id="2.40.50.140">
    <property type="entry name" value="Nucleic acid-binding proteins"/>
    <property type="match status" value="1"/>
</dbReference>
<dbReference type="HAMAP" id="MF_00044">
    <property type="entry name" value="Asp_tRNA_synth_type1"/>
    <property type="match status" value="1"/>
</dbReference>
<dbReference type="InterPro" id="IPR004364">
    <property type="entry name" value="Aa-tRNA-synt_II"/>
</dbReference>
<dbReference type="InterPro" id="IPR006195">
    <property type="entry name" value="aa-tRNA-synth_II"/>
</dbReference>
<dbReference type="InterPro" id="IPR045864">
    <property type="entry name" value="aa-tRNA-synth_II/BPL/LPL"/>
</dbReference>
<dbReference type="InterPro" id="IPR004524">
    <property type="entry name" value="Asp-tRNA-ligase_1"/>
</dbReference>
<dbReference type="InterPro" id="IPR047089">
    <property type="entry name" value="Asp-tRNA-ligase_1_N"/>
</dbReference>
<dbReference type="InterPro" id="IPR002312">
    <property type="entry name" value="Asp/Asn-tRNA-synth_IIb"/>
</dbReference>
<dbReference type="InterPro" id="IPR047090">
    <property type="entry name" value="AspRS_core"/>
</dbReference>
<dbReference type="InterPro" id="IPR004115">
    <property type="entry name" value="GAD-like_sf"/>
</dbReference>
<dbReference type="InterPro" id="IPR029351">
    <property type="entry name" value="GAD_dom"/>
</dbReference>
<dbReference type="InterPro" id="IPR012340">
    <property type="entry name" value="NA-bd_OB-fold"/>
</dbReference>
<dbReference type="InterPro" id="IPR004365">
    <property type="entry name" value="NA-bd_OB_tRNA"/>
</dbReference>
<dbReference type="NCBIfam" id="TIGR00459">
    <property type="entry name" value="aspS_bact"/>
    <property type="match status" value="1"/>
</dbReference>
<dbReference type="NCBIfam" id="NF001750">
    <property type="entry name" value="PRK00476.1"/>
    <property type="match status" value="1"/>
</dbReference>
<dbReference type="PANTHER" id="PTHR22594:SF5">
    <property type="entry name" value="ASPARTATE--TRNA LIGASE, MITOCHONDRIAL"/>
    <property type="match status" value="1"/>
</dbReference>
<dbReference type="PANTHER" id="PTHR22594">
    <property type="entry name" value="ASPARTYL/LYSYL-TRNA SYNTHETASE"/>
    <property type="match status" value="1"/>
</dbReference>
<dbReference type="Pfam" id="PF02938">
    <property type="entry name" value="GAD"/>
    <property type="match status" value="1"/>
</dbReference>
<dbReference type="Pfam" id="PF00152">
    <property type="entry name" value="tRNA-synt_2"/>
    <property type="match status" value="1"/>
</dbReference>
<dbReference type="Pfam" id="PF01336">
    <property type="entry name" value="tRNA_anti-codon"/>
    <property type="match status" value="1"/>
</dbReference>
<dbReference type="PRINTS" id="PR01042">
    <property type="entry name" value="TRNASYNTHASP"/>
</dbReference>
<dbReference type="SUPFAM" id="SSF55681">
    <property type="entry name" value="Class II aaRS and biotin synthetases"/>
    <property type="match status" value="1"/>
</dbReference>
<dbReference type="SUPFAM" id="SSF55261">
    <property type="entry name" value="GAD domain-like"/>
    <property type="match status" value="1"/>
</dbReference>
<dbReference type="SUPFAM" id="SSF50249">
    <property type="entry name" value="Nucleic acid-binding proteins"/>
    <property type="match status" value="1"/>
</dbReference>
<dbReference type="PROSITE" id="PS50862">
    <property type="entry name" value="AA_TRNA_LIGASE_II"/>
    <property type="match status" value="1"/>
</dbReference>
<comment type="function">
    <text evidence="1">Aspartyl-tRNA synthetase with relaxed tRNA specificity since it is able to aspartylate not only its cognate tRNA(Asp) but also tRNA(Asn). Reaction proceeds in two steps: L-aspartate is first activated by ATP to form Asp-AMP and then transferred to the acceptor end of tRNA(Asp/Asn).</text>
</comment>
<comment type="catalytic activity">
    <reaction evidence="1">
        <text>tRNA(Asx) + L-aspartate + ATP = L-aspartyl-tRNA(Asx) + AMP + diphosphate</text>
        <dbReference type="Rhea" id="RHEA:18349"/>
        <dbReference type="Rhea" id="RHEA-COMP:9710"/>
        <dbReference type="Rhea" id="RHEA-COMP:9711"/>
        <dbReference type="ChEBI" id="CHEBI:29991"/>
        <dbReference type="ChEBI" id="CHEBI:30616"/>
        <dbReference type="ChEBI" id="CHEBI:33019"/>
        <dbReference type="ChEBI" id="CHEBI:78442"/>
        <dbReference type="ChEBI" id="CHEBI:78516"/>
        <dbReference type="ChEBI" id="CHEBI:456215"/>
        <dbReference type="EC" id="6.1.1.23"/>
    </reaction>
</comment>
<comment type="subunit">
    <text evidence="1">Homodimer.</text>
</comment>
<comment type="subcellular location">
    <subcellularLocation>
        <location evidence="1">Cytoplasm</location>
    </subcellularLocation>
</comment>
<comment type="similarity">
    <text evidence="1">Belongs to the class-II aminoacyl-tRNA synthetase family. Type 1 subfamily.</text>
</comment>
<protein>
    <recommendedName>
        <fullName evidence="1">Aspartate--tRNA(Asp/Asn) ligase</fullName>
        <ecNumber evidence="1">6.1.1.23</ecNumber>
    </recommendedName>
    <alternativeName>
        <fullName evidence="1">Aspartyl-tRNA synthetase</fullName>
        <shortName evidence="1">AspRS</shortName>
    </alternativeName>
    <alternativeName>
        <fullName evidence="1">Non-discriminating aspartyl-tRNA synthetase</fullName>
        <shortName evidence="1">ND-AspRS</shortName>
    </alternativeName>
</protein>
<evidence type="ECO:0000255" key="1">
    <source>
        <dbReference type="HAMAP-Rule" id="MF_00044"/>
    </source>
</evidence>
<feature type="chain" id="PRO_0000110889" description="Aspartate--tRNA(Asp/Asn) ligase">
    <location>
        <begin position="1"/>
        <end position="593"/>
    </location>
</feature>
<feature type="region of interest" description="Aspartate" evidence="1">
    <location>
        <begin position="197"/>
        <end position="200"/>
    </location>
</feature>
<feature type="binding site" evidence="1">
    <location>
        <position position="173"/>
    </location>
    <ligand>
        <name>L-aspartate</name>
        <dbReference type="ChEBI" id="CHEBI:29991"/>
    </ligand>
</feature>
<feature type="binding site" evidence="1">
    <location>
        <begin position="219"/>
        <end position="221"/>
    </location>
    <ligand>
        <name>ATP</name>
        <dbReference type="ChEBI" id="CHEBI:30616"/>
    </ligand>
</feature>
<feature type="binding site" evidence="1">
    <location>
        <position position="219"/>
    </location>
    <ligand>
        <name>L-aspartate</name>
        <dbReference type="ChEBI" id="CHEBI:29991"/>
    </ligand>
</feature>
<feature type="binding site" evidence="1">
    <location>
        <position position="228"/>
    </location>
    <ligand>
        <name>ATP</name>
        <dbReference type="ChEBI" id="CHEBI:30616"/>
    </ligand>
</feature>
<feature type="binding site" evidence="1">
    <location>
        <position position="451"/>
    </location>
    <ligand>
        <name>L-aspartate</name>
        <dbReference type="ChEBI" id="CHEBI:29991"/>
    </ligand>
</feature>
<feature type="binding site" evidence="1">
    <location>
        <position position="485"/>
    </location>
    <ligand>
        <name>ATP</name>
        <dbReference type="ChEBI" id="CHEBI:30616"/>
    </ligand>
</feature>
<feature type="binding site" evidence="1">
    <location>
        <position position="492"/>
    </location>
    <ligand>
        <name>L-aspartate</name>
        <dbReference type="ChEBI" id="CHEBI:29991"/>
    </ligand>
</feature>
<feature type="binding site" evidence="1">
    <location>
        <begin position="537"/>
        <end position="540"/>
    </location>
    <ligand>
        <name>ATP</name>
        <dbReference type="ChEBI" id="CHEBI:30616"/>
    </ligand>
</feature>
<feature type="site" description="Important for tRNA non-discrimination" evidence="1">
    <location>
        <position position="30"/>
    </location>
</feature>
<feature type="site" description="Important for tRNA non-discrimination" evidence="1">
    <location>
        <position position="81"/>
    </location>
</feature>
<keyword id="KW-0030">Aminoacyl-tRNA synthetase</keyword>
<keyword id="KW-0067">ATP-binding</keyword>
<keyword id="KW-0963">Cytoplasm</keyword>
<keyword id="KW-0436">Ligase</keyword>
<keyword id="KW-0547">Nucleotide-binding</keyword>
<keyword id="KW-0648">Protein biosynthesis</keyword>
<sequence length="593" mass="66922">MRTHYCSAVNELSLDKQITVCGWVHNRRDHGGVIFLDIRDRSGLLQVVYEPENKEIFAIAEKLRSEFVVRVTGIVRKRPEGMINDKMETGRVEVIGIQLEILNQSPTPPFLPDDHQIINEDLRYKYRYIDLRRAVMQKKLTLRHKLNSCIRNYLNEQNFLDIETPMLTKATPEGARDYLVPSRVHPGQFYALPQSPQLFKQLLMMSGFDKYYQIVRCFRDEDLRADRQPEFTQLDIEMAFINEEDILQLIEGLLKVVFKEILNITLPDKLPRMSYKEAMTRYGSDKPDLRNPLELIDIADLVKDCDFNVFASAANDNSGRVVALKLPNGCDLSRKDLDNYGQFVTIYGAKGLAYIKVNDLSAGMAGLQSPILKFLSETAVQSILNRVEAQTGDVIFFGADKAHVVNESMGALRNKLGHDRNLINPGWQLLWVIDWPMFELDPQSNKLQPMHHPFTSPQELSAEALRSKPTQTLAKAYDIVINGYEIGGGSIRIHQPELQKTVFDLIGIDEQEAHEKFGFLLDALQYGAPPHGGIALGIDRLAMLLTDSTSIRDVIAFPKTQTASCPLTSAPSPAGNAQLTELGIRLAPTITTK</sequence>
<reference key="1">
    <citation type="journal article" date="2004" name="Nat. Genet.">
        <title>Evidence in the Legionella pneumophila genome for exploitation of host cell functions and high genome plasticity.</title>
        <authorList>
            <person name="Cazalet C."/>
            <person name="Rusniok C."/>
            <person name="Brueggemann H."/>
            <person name="Zidane N."/>
            <person name="Magnier A."/>
            <person name="Ma L."/>
            <person name="Tichit M."/>
            <person name="Jarraud S."/>
            <person name="Bouchier C."/>
            <person name="Vandenesch F."/>
            <person name="Kunst F."/>
            <person name="Etienne J."/>
            <person name="Glaser P."/>
            <person name="Buchrieser C."/>
        </authorList>
    </citation>
    <scope>NUCLEOTIDE SEQUENCE [LARGE SCALE GENOMIC DNA]</scope>
    <source>
        <strain>Paris</strain>
    </source>
</reference>
<proteinExistence type="inferred from homology"/>
<organism>
    <name type="scientific">Legionella pneumophila (strain Paris)</name>
    <dbReference type="NCBI Taxonomy" id="297246"/>
    <lineage>
        <taxon>Bacteria</taxon>
        <taxon>Pseudomonadati</taxon>
        <taxon>Pseudomonadota</taxon>
        <taxon>Gammaproteobacteria</taxon>
        <taxon>Legionellales</taxon>
        <taxon>Legionellaceae</taxon>
        <taxon>Legionella</taxon>
    </lineage>
</organism>
<accession>Q5X586</accession>